<name>KCNH8_MOUSE</name>
<dbReference type="EMBL" id="AC122055">
    <property type="status" value="NOT_ANNOTATED_CDS"/>
    <property type="molecule type" value="Genomic_DNA"/>
</dbReference>
<dbReference type="EMBL" id="AC122540">
    <property type="status" value="NOT_ANNOTATED_CDS"/>
    <property type="molecule type" value="Genomic_DNA"/>
</dbReference>
<dbReference type="EMBL" id="AC125051">
    <property type="status" value="NOT_ANNOTATED_CDS"/>
    <property type="molecule type" value="Genomic_DNA"/>
</dbReference>
<dbReference type="EMBL" id="AC131674">
    <property type="status" value="NOT_ANNOTATED_CDS"/>
    <property type="molecule type" value="Genomic_DNA"/>
</dbReference>
<dbReference type="EMBL" id="AK048629">
    <property type="protein sequence ID" value="BAC33401.1"/>
    <property type="molecule type" value="mRNA"/>
</dbReference>
<dbReference type="EMBL" id="BC029690">
    <property type="protein sequence ID" value="AAH29690.1"/>
    <property type="molecule type" value="mRNA"/>
</dbReference>
<dbReference type="CCDS" id="CCDS57101.1"/>
<dbReference type="RefSeq" id="NP_001026981.2">
    <property type="nucleotide sequence ID" value="NM_001031811.2"/>
</dbReference>
<dbReference type="SMR" id="P59111"/>
<dbReference type="CORUM" id="P59111"/>
<dbReference type="FunCoup" id="P59111">
    <property type="interactions" value="444"/>
</dbReference>
<dbReference type="STRING" id="10090.ENSMUSP00000049206"/>
<dbReference type="GlyCosmos" id="P59111">
    <property type="glycosylation" value="2 sites, No reported glycans"/>
</dbReference>
<dbReference type="GlyGen" id="P59111">
    <property type="glycosylation" value="3 sites"/>
</dbReference>
<dbReference type="PhosphoSitePlus" id="P59111"/>
<dbReference type="PaxDb" id="10090-ENSMUSP00000049206"/>
<dbReference type="ProteomicsDB" id="269201"/>
<dbReference type="DNASU" id="211468"/>
<dbReference type="GeneID" id="211468"/>
<dbReference type="KEGG" id="mmu:211468"/>
<dbReference type="AGR" id="MGI:2445160"/>
<dbReference type="CTD" id="131096"/>
<dbReference type="MGI" id="MGI:2445160">
    <property type="gene designation" value="Kcnh8"/>
</dbReference>
<dbReference type="eggNOG" id="KOG0498">
    <property type="taxonomic scope" value="Eukaryota"/>
</dbReference>
<dbReference type="InParanoid" id="P59111"/>
<dbReference type="OrthoDB" id="432483at2759"/>
<dbReference type="PhylomeDB" id="P59111"/>
<dbReference type="Reactome" id="R-MMU-1296072">
    <property type="pathway name" value="Voltage gated Potassium channels"/>
</dbReference>
<dbReference type="BioGRID-ORCS" id="211468">
    <property type="hits" value="1 hit in 79 CRISPR screens"/>
</dbReference>
<dbReference type="ChiTaRS" id="Kcnh8">
    <property type="organism name" value="mouse"/>
</dbReference>
<dbReference type="PRO" id="PR:P59111"/>
<dbReference type="Proteomes" id="UP000000589">
    <property type="component" value="Unplaced"/>
</dbReference>
<dbReference type="RNAct" id="P59111">
    <property type="molecule type" value="protein"/>
</dbReference>
<dbReference type="GO" id="GO:0034702">
    <property type="term" value="C:monoatomic ion channel complex"/>
    <property type="evidence" value="ECO:0007669"/>
    <property type="project" value="UniProtKB-KW"/>
</dbReference>
<dbReference type="GO" id="GO:0005251">
    <property type="term" value="F:delayed rectifier potassium channel activity"/>
    <property type="evidence" value="ECO:0000250"/>
    <property type="project" value="UniProtKB"/>
</dbReference>
<dbReference type="GO" id="GO:0006813">
    <property type="term" value="P:potassium ion transport"/>
    <property type="evidence" value="ECO:0000250"/>
    <property type="project" value="UniProtKB"/>
</dbReference>
<dbReference type="CDD" id="cd00038">
    <property type="entry name" value="CAP_ED"/>
    <property type="match status" value="1"/>
</dbReference>
<dbReference type="CDD" id="cd00130">
    <property type="entry name" value="PAS"/>
    <property type="match status" value="1"/>
</dbReference>
<dbReference type="FunFam" id="1.10.1200.260:FF:000002">
    <property type="entry name" value="Potassium voltage-gated channel subfamily H member 8"/>
    <property type="match status" value="1"/>
</dbReference>
<dbReference type="FunFam" id="3.30.450.20:FF:000118">
    <property type="entry name" value="Potassium voltage-gated channel subfamily H member 8"/>
    <property type="match status" value="1"/>
</dbReference>
<dbReference type="FunFam" id="2.60.120.10:FF:000014">
    <property type="entry name" value="Potassium voltage-gated channel, subfamily H (Eag-related), member 4"/>
    <property type="match status" value="1"/>
</dbReference>
<dbReference type="Gene3D" id="1.10.1200.260">
    <property type="match status" value="1"/>
</dbReference>
<dbReference type="Gene3D" id="1.10.287.70">
    <property type="match status" value="1"/>
</dbReference>
<dbReference type="Gene3D" id="2.60.120.10">
    <property type="entry name" value="Jelly Rolls"/>
    <property type="match status" value="1"/>
</dbReference>
<dbReference type="Gene3D" id="3.30.450.20">
    <property type="entry name" value="PAS domain"/>
    <property type="match status" value="1"/>
</dbReference>
<dbReference type="InterPro" id="IPR000595">
    <property type="entry name" value="cNMP-bd_dom"/>
</dbReference>
<dbReference type="InterPro" id="IPR018490">
    <property type="entry name" value="cNMP-bd_dom_sf"/>
</dbReference>
<dbReference type="InterPro" id="IPR005821">
    <property type="entry name" value="Ion_trans_dom"/>
</dbReference>
<dbReference type="InterPro" id="IPR003938">
    <property type="entry name" value="K_chnl_volt-dep_EAG/ELK/ERG"/>
</dbReference>
<dbReference type="InterPro" id="IPR003950">
    <property type="entry name" value="K_chnl_volt-dep_ELK"/>
</dbReference>
<dbReference type="InterPro" id="IPR050818">
    <property type="entry name" value="KCNH_animal-type"/>
</dbReference>
<dbReference type="InterPro" id="IPR001610">
    <property type="entry name" value="PAC"/>
</dbReference>
<dbReference type="InterPro" id="IPR000014">
    <property type="entry name" value="PAS"/>
</dbReference>
<dbReference type="InterPro" id="IPR000700">
    <property type="entry name" value="PAS-assoc_C"/>
</dbReference>
<dbReference type="InterPro" id="IPR035965">
    <property type="entry name" value="PAS-like_dom_sf"/>
</dbReference>
<dbReference type="InterPro" id="IPR014710">
    <property type="entry name" value="RmlC-like_jellyroll"/>
</dbReference>
<dbReference type="NCBIfam" id="TIGR00229">
    <property type="entry name" value="sensory_box"/>
    <property type="match status" value="1"/>
</dbReference>
<dbReference type="PANTHER" id="PTHR10217:SF380">
    <property type="entry name" value="POTASSIUM VOLTAGE-GATED CHANNEL SUBFAMILY H MEMBER 8"/>
    <property type="match status" value="1"/>
</dbReference>
<dbReference type="PANTHER" id="PTHR10217">
    <property type="entry name" value="VOLTAGE AND LIGAND GATED POTASSIUM CHANNEL"/>
    <property type="match status" value="1"/>
</dbReference>
<dbReference type="Pfam" id="PF00027">
    <property type="entry name" value="cNMP_binding"/>
    <property type="match status" value="1"/>
</dbReference>
<dbReference type="Pfam" id="PF00520">
    <property type="entry name" value="Ion_trans"/>
    <property type="match status" value="1"/>
</dbReference>
<dbReference type="Pfam" id="PF13426">
    <property type="entry name" value="PAS_9"/>
    <property type="match status" value="1"/>
</dbReference>
<dbReference type="PRINTS" id="PR01463">
    <property type="entry name" value="EAGCHANLFMLY"/>
</dbReference>
<dbReference type="PRINTS" id="PR01465">
    <property type="entry name" value="ELKCHANNEL"/>
</dbReference>
<dbReference type="SMART" id="SM00100">
    <property type="entry name" value="cNMP"/>
    <property type="match status" value="1"/>
</dbReference>
<dbReference type="SMART" id="SM00086">
    <property type="entry name" value="PAC"/>
    <property type="match status" value="1"/>
</dbReference>
<dbReference type="SUPFAM" id="SSF51206">
    <property type="entry name" value="cAMP-binding domain-like"/>
    <property type="match status" value="1"/>
</dbReference>
<dbReference type="SUPFAM" id="SSF55785">
    <property type="entry name" value="PYP-like sensor domain (PAS domain)"/>
    <property type="match status" value="1"/>
</dbReference>
<dbReference type="SUPFAM" id="SSF81324">
    <property type="entry name" value="Voltage-gated potassium channels"/>
    <property type="match status" value="1"/>
</dbReference>
<dbReference type="PROSITE" id="PS50042">
    <property type="entry name" value="CNMP_BINDING_3"/>
    <property type="match status" value="1"/>
</dbReference>
<dbReference type="PROSITE" id="PS50113">
    <property type="entry name" value="PAC"/>
    <property type="match status" value="1"/>
</dbReference>
<protein>
    <recommendedName>
        <fullName evidence="7">Voltage-gated delayed rectifier potassium channel KCNH8</fullName>
    </recommendedName>
    <alternativeName>
        <fullName>Ether-a-go-go-like potassium channel 3</fullName>
        <shortName>ELK channel 3</shortName>
        <shortName>ELK3</shortName>
    </alternativeName>
    <alternativeName>
        <fullName>Potassium voltage-gated channel subfamily H member 8</fullName>
    </alternativeName>
    <alternativeName>
        <fullName>Voltage-gated potassium channel subunit Kv12.1</fullName>
    </alternativeName>
</protein>
<organism>
    <name type="scientific">Mus musculus</name>
    <name type="common">Mouse</name>
    <dbReference type="NCBI Taxonomy" id="10090"/>
    <lineage>
        <taxon>Eukaryota</taxon>
        <taxon>Metazoa</taxon>
        <taxon>Chordata</taxon>
        <taxon>Craniata</taxon>
        <taxon>Vertebrata</taxon>
        <taxon>Euteleostomi</taxon>
        <taxon>Mammalia</taxon>
        <taxon>Eutheria</taxon>
        <taxon>Euarchontoglires</taxon>
        <taxon>Glires</taxon>
        <taxon>Rodentia</taxon>
        <taxon>Myomorpha</taxon>
        <taxon>Muroidea</taxon>
        <taxon>Muridae</taxon>
        <taxon>Murinae</taxon>
        <taxon>Mus</taxon>
        <taxon>Mus</taxon>
    </lineage>
</organism>
<reference key="1">
    <citation type="journal article" date="2009" name="PLoS Biol.">
        <title>Lineage-specific biology revealed by a finished genome assembly of the mouse.</title>
        <authorList>
            <person name="Church D.M."/>
            <person name="Goodstadt L."/>
            <person name="Hillier L.W."/>
            <person name="Zody M.C."/>
            <person name="Goldstein S."/>
            <person name="She X."/>
            <person name="Bult C.J."/>
            <person name="Agarwala R."/>
            <person name="Cherry J.L."/>
            <person name="DiCuccio M."/>
            <person name="Hlavina W."/>
            <person name="Kapustin Y."/>
            <person name="Meric P."/>
            <person name="Maglott D."/>
            <person name="Birtle Z."/>
            <person name="Marques A.C."/>
            <person name="Graves T."/>
            <person name="Zhou S."/>
            <person name="Teague B."/>
            <person name="Potamousis K."/>
            <person name="Churas C."/>
            <person name="Place M."/>
            <person name="Herschleb J."/>
            <person name="Runnheim R."/>
            <person name="Forrest D."/>
            <person name="Amos-Landgraf J."/>
            <person name="Schwartz D.C."/>
            <person name="Cheng Z."/>
            <person name="Lindblad-Toh K."/>
            <person name="Eichler E.E."/>
            <person name="Ponting C.P."/>
        </authorList>
    </citation>
    <scope>NUCLEOTIDE SEQUENCE [LARGE SCALE GENOMIC DNA]</scope>
    <source>
        <strain>C57BL/6J</strain>
    </source>
</reference>
<reference key="2">
    <citation type="journal article" date="2005" name="Science">
        <title>The transcriptional landscape of the mammalian genome.</title>
        <authorList>
            <person name="Carninci P."/>
            <person name="Kasukawa T."/>
            <person name="Katayama S."/>
            <person name="Gough J."/>
            <person name="Frith M.C."/>
            <person name="Maeda N."/>
            <person name="Oyama R."/>
            <person name="Ravasi T."/>
            <person name="Lenhard B."/>
            <person name="Wells C."/>
            <person name="Kodzius R."/>
            <person name="Shimokawa K."/>
            <person name="Bajic V.B."/>
            <person name="Brenner S.E."/>
            <person name="Batalov S."/>
            <person name="Forrest A.R."/>
            <person name="Zavolan M."/>
            <person name="Davis M.J."/>
            <person name="Wilming L.G."/>
            <person name="Aidinis V."/>
            <person name="Allen J.E."/>
            <person name="Ambesi-Impiombato A."/>
            <person name="Apweiler R."/>
            <person name="Aturaliya R.N."/>
            <person name="Bailey T.L."/>
            <person name="Bansal M."/>
            <person name="Baxter L."/>
            <person name="Beisel K.W."/>
            <person name="Bersano T."/>
            <person name="Bono H."/>
            <person name="Chalk A.M."/>
            <person name="Chiu K.P."/>
            <person name="Choudhary V."/>
            <person name="Christoffels A."/>
            <person name="Clutterbuck D.R."/>
            <person name="Crowe M.L."/>
            <person name="Dalla E."/>
            <person name="Dalrymple B.P."/>
            <person name="de Bono B."/>
            <person name="Della Gatta G."/>
            <person name="di Bernardo D."/>
            <person name="Down T."/>
            <person name="Engstrom P."/>
            <person name="Fagiolini M."/>
            <person name="Faulkner G."/>
            <person name="Fletcher C.F."/>
            <person name="Fukushima T."/>
            <person name="Furuno M."/>
            <person name="Futaki S."/>
            <person name="Gariboldi M."/>
            <person name="Georgii-Hemming P."/>
            <person name="Gingeras T.R."/>
            <person name="Gojobori T."/>
            <person name="Green R.E."/>
            <person name="Gustincich S."/>
            <person name="Harbers M."/>
            <person name="Hayashi Y."/>
            <person name="Hensch T.K."/>
            <person name="Hirokawa N."/>
            <person name="Hill D."/>
            <person name="Huminiecki L."/>
            <person name="Iacono M."/>
            <person name="Ikeo K."/>
            <person name="Iwama A."/>
            <person name="Ishikawa T."/>
            <person name="Jakt M."/>
            <person name="Kanapin A."/>
            <person name="Katoh M."/>
            <person name="Kawasawa Y."/>
            <person name="Kelso J."/>
            <person name="Kitamura H."/>
            <person name="Kitano H."/>
            <person name="Kollias G."/>
            <person name="Krishnan S.P."/>
            <person name="Kruger A."/>
            <person name="Kummerfeld S.K."/>
            <person name="Kurochkin I.V."/>
            <person name="Lareau L.F."/>
            <person name="Lazarevic D."/>
            <person name="Lipovich L."/>
            <person name="Liu J."/>
            <person name="Liuni S."/>
            <person name="McWilliam S."/>
            <person name="Madan Babu M."/>
            <person name="Madera M."/>
            <person name="Marchionni L."/>
            <person name="Matsuda H."/>
            <person name="Matsuzawa S."/>
            <person name="Miki H."/>
            <person name="Mignone F."/>
            <person name="Miyake S."/>
            <person name="Morris K."/>
            <person name="Mottagui-Tabar S."/>
            <person name="Mulder N."/>
            <person name="Nakano N."/>
            <person name="Nakauchi H."/>
            <person name="Ng P."/>
            <person name="Nilsson R."/>
            <person name="Nishiguchi S."/>
            <person name="Nishikawa S."/>
            <person name="Nori F."/>
            <person name="Ohara O."/>
            <person name="Okazaki Y."/>
            <person name="Orlando V."/>
            <person name="Pang K.C."/>
            <person name="Pavan W.J."/>
            <person name="Pavesi G."/>
            <person name="Pesole G."/>
            <person name="Petrovsky N."/>
            <person name="Piazza S."/>
            <person name="Reed J."/>
            <person name="Reid J.F."/>
            <person name="Ring B.Z."/>
            <person name="Ringwald M."/>
            <person name="Rost B."/>
            <person name="Ruan Y."/>
            <person name="Salzberg S.L."/>
            <person name="Sandelin A."/>
            <person name="Schneider C."/>
            <person name="Schoenbach C."/>
            <person name="Sekiguchi K."/>
            <person name="Semple C.A."/>
            <person name="Seno S."/>
            <person name="Sessa L."/>
            <person name="Sheng Y."/>
            <person name="Shibata Y."/>
            <person name="Shimada H."/>
            <person name="Shimada K."/>
            <person name="Silva D."/>
            <person name="Sinclair B."/>
            <person name="Sperling S."/>
            <person name="Stupka E."/>
            <person name="Sugiura K."/>
            <person name="Sultana R."/>
            <person name="Takenaka Y."/>
            <person name="Taki K."/>
            <person name="Tammoja K."/>
            <person name="Tan S.L."/>
            <person name="Tang S."/>
            <person name="Taylor M.S."/>
            <person name="Tegner J."/>
            <person name="Teichmann S.A."/>
            <person name="Ueda H.R."/>
            <person name="van Nimwegen E."/>
            <person name="Verardo R."/>
            <person name="Wei C.L."/>
            <person name="Yagi K."/>
            <person name="Yamanishi H."/>
            <person name="Zabarovsky E."/>
            <person name="Zhu S."/>
            <person name="Zimmer A."/>
            <person name="Hide W."/>
            <person name="Bult C."/>
            <person name="Grimmond S.M."/>
            <person name="Teasdale R.D."/>
            <person name="Liu E.T."/>
            <person name="Brusic V."/>
            <person name="Quackenbush J."/>
            <person name="Wahlestedt C."/>
            <person name="Mattick J.S."/>
            <person name="Hume D.A."/>
            <person name="Kai C."/>
            <person name="Sasaki D."/>
            <person name="Tomaru Y."/>
            <person name="Fukuda S."/>
            <person name="Kanamori-Katayama M."/>
            <person name="Suzuki M."/>
            <person name="Aoki J."/>
            <person name="Arakawa T."/>
            <person name="Iida J."/>
            <person name="Imamura K."/>
            <person name="Itoh M."/>
            <person name="Kato T."/>
            <person name="Kawaji H."/>
            <person name="Kawagashira N."/>
            <person name="Kawashima T."/>
            <person name="Kojima M."/>
            <person name="Kondo S."/>
            <person name="Konno H."/>
            <person name="Nakano K."/>
            <person name="Ninomiya N."/>
            <person name="Nishio T."/>
            <person name="Okada M."/>
            <person name="Plessy C."/>
            <person name="Shibata K."/>
            <person name="Shiraki T."/>
            <person name="Suzuki S."/>
            <person name="Tagami M."/>
            <person name="Waki K."/>
            <person name="Watahiki A."/>
            <person name="Okamura-Oho Y."/>
            <person name="Suzuki H."/>
            <person name="Kawai J."/>
            <person name="Hayashizaki Y."/>
        </authorList>
    </citation>
    <scope>NUCLEOTIDE SEQUENCE [LARGE SCALE MRNA] OF 6-1102</scope>
    <source>
        <strain>C57BL/6J</strain>
        <tissue>Head</tissue>
    </source>
</reference>
<reference key="3">
    <citation type="journal article" date="2004" name="Genome Res.">
        <title>The status, quality, and expansion of the NIH full-length cDNA project: the Mammalian Gene Collection (MGC).</title>
        <authorList>
            <consortium name="The MGC Project Team"/>
        </authorList>
    </citation>
    <scope>NUCLEOTIDE SEQUENCE [LARGE SCALE MRNA] OF 227-1102</scope>
    <source>
        <strain>C57BL/6J</strain>
        <tissue>Retina</tissue>
    </source>
</reference>
<comment type="function">
    <text evidence="2">Pore-forming (alpha) subunit of a voltage-gated delayed rectifier potassium channel that mediates outward-rectifying potassium currents. Elicits a slowly activating, non-inactivating and slowly deactivation outwards potassium current at depolarizating voltages from -30 mV to +50mV. Shows no obvious change in the activation rate from different holding potentials. Activation is strongly dependent on the pH of the external solution.</text>
</comment>
<comment type="catalytic activity">
    <reaction evidence="2">
        <text>K(+)(in) = K(+)(out)</text>
        <dbReference type="Rhea" id="RHEA:29463"/>
        <dbReference type="ChEBI" id="CHEBI:29103"/>
    </reaction>
</comment>
<comment type="subunit">
    <text evidence="2">The potassium channel is probably composed of a homo- or heterotetrameric complex of pore-forming alpha subunits that can associate with modulating beta subunits.</text>
</comment>
<comment type="subcellular location">
    <subcellularLocation>
        <location evidence="3">Membrane</location>
        <topology evidence="3">Multi-pass membrane protein</topology>
    </subcellularLocation>
</comment>
<comment type="similarity">
    <text evidence="7">Belongs to the potassium channel family. H (Eag) (TC 1.A.1.20) subfamily. Kv12.1/KCNH8 sub-subfamily.</text>
</comment>
<keyword id="KW-0325">Glycoprotein</keyword>
<keyword id="KW-0407">Ion channel</keyword>
<keyword id="KW-0406">Ion transport</keyword>
<keyword id="KW-0472">Membrane</keyword>
<keyword id="KW-0630">Potassium</keyword>
<keyword id="KW-0631">Potassium channel</keyword>
<keyword id="KW-0633">Potassium transport</keyword>
<keyword id="KW-1185">Reference proteome</keyword>
<keyword id="KW-0812">Transmembrane</keyword>
<keyword id="KW-1133">Transmembrane helix</keyword>
<keyword id="KW-0813">Transport</keyword>
<keyword id="KW-0851">Voltage-gated channel</keyword>
<feature type="chain" id="PRO_0000054019" description="Voltage-gated delayed rectifier potassium channel KCNH8">
    <location>
        <begin position="1"/>
        <end position="1102"/>
    </location>
</feature>
<feature type="topological domain" description="Cytoplasmic" evidence="3">
    <location>
        <begin position="1"/>
        <end position="225"/>
    </location>
</feature>
<feature type="transmembrane region" description="Helical; Name=Segment S1" evidence="3">
    <location>
        <begin position="226"/>
        <end position="246"/>
    </location>
</feature>
<feature type="topological domain" description="Extracellular" evidence="3">
    <location>
        <begin position="247"/>
        <end position="255"/>
    </location>
</feature>
<feature type="transmembrane region" description="Helical; Name=Segment S2" evidence="3">
    <location>
        <begin position="256"/>
        <end position="276"/>
    </location>
</feature>
<feature type="topological domain" description="Cytoplasmic" evidence="3">
    <location>
        <begin position="277"/>
        <end position="298"/>
    </location>
</feature>
<feature type="transmembrane region" description="Helical; Name=Segment S3" evidence="3">
    <location>
        <begin position="299"/>
        <end position="319"/>
    </location>
</feature>
<feature type="topological domain" description="Extracellular" evidence="3">
    <location>
        <begin position="320"/>
        <end position="327"/>
    </location>
</feature>
<feature type="transmembrane region" description="Helical; Voltage-sensor; Name=Segment S4" evidence="3">
    <location>
        <begin position="328"/>
        <end position="348"/>
    </location>
</feature>
<feature type="topological domain" description="Cytoplasmic" evidence="3">
    <location>
        <begin position="349"/>
        <end position="357"/>
    </location>
</feature>
<feature type="transmembrane region" description="Helical; Name=Segment S5" evidence="3">
    <location>
        <begin position="358"/>
        <end position="378"/>
    </location>
</feature>
<feature type="topological domain" description="Extracellular" evidence="3">
    <location>
        <begin position="379"/>
        <end position="419"/>
    </location>
</feature>
<feature type="intramembrane region" description="Pore-forming; Name=Segment H5" evidence="3">
    <location>
        <begin position="420"/>
        <end position="440"/>
    </location>
</feature>
<feature type="topological domain" description="Extracellular" evidence="3">
    <location>
        <begin position="441"/>
        <end position="448"/>
    </location>
</feature>
<feature type="transmembrane region" description="Helical; Name=Segment S6" evidence="3">
    <location>
        <begin position="449"/>
        <end position="469"/>
    </location>
</feature>
<feature type="topological domain" description="Cytoplasmic" evidence="3">
    <location>
        <begin position="470"/>
        <end position="1102"/>
    </location>
</feature>
<feature type="domain" description="PAS">
    <location>
        <begin position="18"/>
        <end position="90"/>
    </location>
</feature>
<feature type="domain" description="PAC" evidence="5">
    <location>
        <begin position="93"/>
        <end position="145"/>
    </location>
</feature>
<feature type="region of interest" description="Disordered" evidence="6">
    <location>
        <begin position="142"/>
        <end position="162"/>
    </location>
</feature>
<feature type="region of interest" description="cNMP-binding domain" evidence="4">
    <location>
        <begin position="551"/>
        <end position="668"/>
    </location>
</feature>
<feature type="region of interest" description="Disordered" evidence="6">
    <location>
        <begin position="684"/>
        <end position="743"/>
    </location>
</feature>
<feature type="region of interest" description="Disordered" evidence="6">
    <location>
        <begin position="764"/>
        <end position="841"/>
    </location>
</feature>
<feature type="region of interest" description="Disordered" evidence="6">
    <location>
        <begin position="960"/>
        <end position="991"/>
    </location>
</feature>
<feature type="short sequence motif" description="Selectivity filter" evidence="1">
    <location>
        <begin position="434"/>
        <end position="439"/>
    </location>
</feature>
<feature type="compositionally biased region" description="Basic and acidic residues" evidence="6">
    <location>
        <begin position="142"/>
        <end position="151"/>
    </location>
</feature>
<feature type="compositionally biased region" description="Polar residues" evidence="6">
    <location>
        <begin position="684"/>
        <end position="693"/>
    </location>
</feature>
<feature type="compositionally biased region" description="Acidic residues" evidence="6">
    <location>
        <begin position="710"/>
        <end position="723"/>
    </location>
</feature>
<feature type="compositionally biased region" description="Polar residues" evidence="6">
    <location>
        <begin position="724"/>
        <end position="737"/>
    </location>
</feature>
<feature type="compositionally biased region" description="Basic and acidic residues" evidence="6">
    <location>
        <begin position="968"/>
        <end position="984"/>
    </location>
</feature>
<feature type="glycosylation site" description="N-linked (GlcNAc...) asparagine" evidence="3">
    <location>
        <position position="320"/>
    </location>
</feature>
<feature type="glycosylation site" description="N-linked (GlcNAc...) asparagine" evidence="3">
    <location>
        <position position="409"/>
    </location>
</feature>
<feature type="sequence conflict" description="In Ref. 2; BAC33401." evidence="7" ref="2">
    <original>V</original>
    <variation>I</variation>
    <location>
        <position position="376"/>
    </location>
</feature>
<feature type="sequence conflict" description="In Ref. 2; BAC33401." evidence="7" ref="2">
    <original>N</original>
    <variation>D</variation>
    <location>
        <position position="543"/>
    </location>
</feature>
<proteinExistence type="evidence at transcript level"/>
<evidence type="ECO:0000250" key="1"/>
<evidence type="ECO:0000250" key="2">
    <source>
        <dbReference type="UniProtKB" id="Q9QWS8"/>
    </source>
</evidence>
<evidence type="ECO:0000255" key="3"/>
<evidence type="ECO:0000255" key="4">
    <source>
        <dbReference type="PROSITE-ProRule" id="PRU00060"/>
    </source>
</evidence>
<evidence type="ECO:0000255" key="5">
    <source>
        <dbReference type="PROSITE-ProRule" id="PRU00141"/>
    </source>
</evidence>
<evidence type="ECO:0000256" key="6">
    <source>
        <dbReference type="SAM" id="MobiDB-lite"/>
    </source>
</evidence>
<evidence type="ECO:0000305" key="7"/>
<evidence type="ECO:0000312" key="8">
    <source>
        <dbReference type="MGI" id="MGI:2445160"/>
    </source>
</evidence>
<sequence length="1102" mass="123277">MPVMKGLLAPQNTFLDTIATRFDGTHSNFILANAQVAKGFPIVYCSDGFCELAGFARTEVMQKSCSCKFLFGVETNEQLMLQIEKSLEEKVEFKGEIMFYKKNGAPFWCLLDIVPIKNEKGDVVLFLASFKDITDTKVKITSEDKKEDRTKGRSRAGSHFDSARRRSRAVLYHISGHLQRREKNKLKINNNVFVDKPAFPEYKASDAKKSKFILLHFSTFKAGWDWLILLATFYVAVTVPYNVCFIGNEDLSTTRSTTVSDIAVEILFIIDIILNFRTTYVSKSGQVIFEARSICIHYVTTWFIIDLIAALPFDLLYAFNVTVVSLVHLLKTVRLLRLLRLLQKLDRYSQHSTIVLTLLMSMFALLAHWMACIWYVIGKMEREDNSLLKWEVGWLHELGKRLESPYYGNNTLGGPSIRSAYIAALYFTLSSLTSVGFGNVSANTDAEKIFSICTMLIGALMHALVFGNVTAIIQRMYSRWSLYHTRTKDLKDFIRVHHLPQQLKQRMLEYFQTTWSVNNGIDSNELLKDFPDELRSDITMHLNKEILQLSLFECASRGCLRSLSLHIKTSFCAPGEYLLRQGDALQAIYFVCSGSMEVLKDSMVLAILGKGDLIGANLSIKDQVIKTNADVKALTYCDLQCIILKGLFEVLGLYPEYAHKFVEDIQHDLTYNLREGHESDVISRLSNKSTVSQAEPKGNGSINKRLPSIVEDEEEEEVEEEETTSLSPIYTRGSSVSHSKKTGSNKTYLGLSLKQLASGTVPFHSPIRVSSANSPKTKQEADPPNHGRKKEKNLKVQLSSLGSAGTPELSPRIVDGIEDGNSNEETQTFDFGSEQIRPEPRISPPLAESEIGAAFLFIKAEETKQQINKLNSEVTTLTQEVSQLGRDMRSIMQLLENILSPQQPSQFCSLHPTPMCPSRESLQTRVSWSAHQPCLHLQAGGAHLYHGNVASGIWSVDPSLVGSSPQRTEAHEQNPADSELHHSPNLDYSPSHCQVIQEGHLQFLRCISPHSDTTLTPLQSISATLSSSVCSSSETSLHLVLPSRSEEGSITHGPVSSFSLENLPGSWDREQMMSASSERLENFPVEVVTSTADVKDSKAINV</sequence>
<gene>
    <name evidence="8" type="primary">Kcnh8</name>
</gene>
<accession>P59111</accession>
<accession>Q8BX82</accession>